<protein>
    <recommendedName>
        <fullName evidence="1">ADP-specific phosphofructokinase</fullName>
        <ecNumber evidence="1">2.7.1.146</ecNumber>
    </recommendedName>
    <alternativeName>
        <fullName evidence="1">ADP-dependent phosphofructokinase</fullName>
        <shortName evidence="1">ADP-Pfk</shortName>
    </alternativeName>
</protein>
<keyword id="KW-0963">Cytoplasm</keyword>
<keyword id="KW-0324">Glycolysis</keyword>
<keyword id="KW-0418">Kinase</keyword>
<keyword id="KW-0460">Magnesium</keyword>
<keyword id="KW-0479">Metal-binding</keyword>
<keyword id="KW-0808">Transferase</keyword>
<gene>
    <name evidence="1" type="primary">pfkC</name>
    <name type="synonym">pfk</name>
</gene>
<dbReference type="EC" id="2.7.1.146" evidence="1"/>
<dbReference type="EMBL" id="AY005811">
    <property type="protein sequence ID" value="AAF97356.1"/>
    <property type="molecule type" value="Genomic_DNA"/>
</dbReference>
<dbReference type="SMR" id="Q9HH12"/>
<dbReference type="BRENDA" id="2.7.1.146">
    <property type="organism ID" value="6306"/>
</dbReference>
<dbReference type="UniPathway" id="UPA00109"/>
<dbReference type="GO" id="GO:0005737">
    <property type="term" value="C:cytoplasm"/>
    <property type="evidence" value="ECO:0007669"/>
    <property type="project" value="UniProtKB-SubCell"/>
</dbReference>
<dbReference type="GO" id="GO:0043844">
    <property type="term" value="F:ADP-specific phosphofructokinase activity"/>
    <property type="evidence" value="ECO:0007669"/>
    <property type="project" value="UniProtKB-EC"/>
</dbReference>
<dbReference type="GO" id="GO:0000287">
    <property type="term" value="F:magnesium ion binding"/>
    <property type="evidence" value="ECO:0007669"/>
    <property type="project" value="InterPro"/>
</dbReference>
<dbReference type="GO" id="GO:0008443">
    <property type="term" value="F:phosphofructokinase activity"/>
    <property type="evidence" value="ECO:0007669"/>
    <property type="project" value="InterPro"/>
</dbReference>
<dbReference type="GO" id="GO:0006000">
    <property type="term" value="P:fructose metabolic process"/>
    <property type="evidence" value="ECO:0007669"/>
    <property type="project" value="InterPro"/>
</dbReference>
<dbReference type="GO" id="GO:0006096">
    <property type="term" value="P:glycolytic process"/>
    <property type="evidence" value="ECO:0007669"/>
    <property type="project" value="UniProtKB-UniRule"/>
</dbReference>
<dbReference type="Gene3D" id="3.30.1110.20">
    <property type="match status" value="1"/>
</dbReference>
<dbReference type="Gene3D" id="3.40.1190.20">
    <property type="match status" value="1"/>
</dbReference>
<dbReference type="HAMAP" id="MF_00561">
    <property type="entry name" value="ADP_PFKinase"/>
    <property type="match status" value="1"/>
</dbReference>
<dbReference type="InterPro" id="IPR007666">
    <property type="entry name" value="ADP_PFK/GK"/>
</dbReference>
<dbReference type="InterPro" id="IPR015990">
    <property type="entry name" value="ADP_PFK/GK_arc"/>
</dbReference>
<dbReference type="InterPro" id="IPR011790">
    <property type="entry name" value="ADP_PFK_arc"/>
</dbReference>
<dbReference type="InterPro" id="IPR029056">
    <property type="entry name" value="Ribokinase-like"/>
</dbReference>
<dbReference type="NCBIfam" id="TIGR02045">
    <property type="entry name" value="P_fruct_ADP"/>
    <property type="match status" value="1"/>
</dbReference>
<dbReference type="PANTHER" id="PTHR21208">
    <property type="entry name" value="ADP-DEPENDENT GLUCOKINASE"/>
    <property type="match status" value="1"/>
</dbReference>
<dbReference type="PANTHER" id="PTHR21208:SF1">
    <property type="entry name" value="ADP-DEPENDENT GLUCOKINASE"/>
    <property type="match status" value="1"/>
</dbReference>
<dbReference type="Pfam" id="PF04587">
    <property type="entry name" value="ADP_PFK_GK"/>
    <property type="match status" value="1"/>
</dbReference>
<dbReference type="PIRSF" id="PIRSF015883">
    <property type="entry name" value="ADP-Pfk_glckin"/>
    <property type="match status" value="1"/>
</dbReference>
<dbReference type="SUPFAM" id="SSF53613">
    <property type="entry name" value="Ribokinase-like"/>
    <property type="match status" value="1"/>
</dbReference>
<dbReference type="PROSITE" id="PS51255">
    <property type="entry name" value="ADPK"/>
    <property type="match status" value="1"/>
</dbReference>
<name>K6PF_THEZI</name>
<evidence type="ECO:0000255" key="1">
    <source>
        <dbReference type="HAMAP-Rule" id="MF_00561"/>
    </source>
</evidence>
<sequence length="461" mass="52758">MVRELLEKARGLSIYTAYNTNVDAIVYLNGETVQRLIDEFGADAVRKRMEDYPREINEPLDFVARLVHALKTGKPMAVPLVNEELHTWFDSHFRYDVERMGGQAGIIANLLSNLDFREVIVYTPHLAKRQAEMFVRKPNLFYPVVEGGRLVLKHPWEAYREGDPVKVNRIFEFRAGTAFKLGDERIVVPFSGRFIVSARFESIRIYTEPGLRPFLPEIGERVDGAILSGYQGINLRYSDGKDANYYLRKAKEDIMLLKREKDLKVHLEFASIQSRELRKKVIYNLFPLADSVGMDEAEIAYVLSALGYDELADRIFTYNRIEDTVLGGKILLDEMNLDVLQIHTIYYIMYITHADNPLSEEELRRSLELATTLAASRASLGDITSPDQIEIGLRVPYNERGEYVKLRFEEAKRKLRTKEYKLVIIPTRLVQNPVSTVGLGDTISTGAFASYLAMLKEKGEL</sequence>
<proteinExistence type="evidence at protein level"/>
<accession>Q9HH12</accession>
<organism>
    <name type="scientific">Thermococcus zilligii</name>
    <dbReference type="NCBI Taxonomy" id="54076"/>
    <lineage>
        <taxon>Archaea</taxon>
        <taxon>Methanobacteriati</taxon>
        <taxon>Methanobacteriota</taxon>
        <taxon>Thermococci</taxon>
        <taxon>Thermococcales</taxon>
        <taxon>Thermococcaceae</taxon>
        <taxon>Thermococcus</taxon>
    </lineage>
</organism>
<feature type="chain" id="PRO_0000184770" description="ADP-specific phosphofructokinase">
    <location>
        <begin position="1"/>
        <end position="461"/>
    </location>
</feature>
<feature type="domain" description="ADPK" evidence="1">
    <location>
        <begin position="1"/>
        <end position="457"/>
    </location>
</feature>
<feature type="active site" description="Proton acceptor" evidence="1">
    <location>
        <position position="441"/>
    </location>
</feature>
<feature type="binding site" evidence="1">
    <location>
        <position position="268"/>
    </location>
    <ligand>
        <name>Mg(2+)</name>
        <dbReference type="ChEBI" id="CHEBI:18420"/>
    </ligand>
</feature>
<feature type="binding site" evidence="1">
    <location>
        <position position="298"/>
    </location>
    <ligand>
        <name>Mg(2+)</name>
        <dbReference type="ChEBI" id="CHEBI:18420"/>
    </ligand>
</feature>
<feature type="binding site" evidence="1">
    <location>
        <position position="441"/>
    </location>
    <ligand>
        <name>Mg(2+)</name>
        <dbReference type="ChEBI" id="CHEBI:18420"/>
    </ligand>
</feature>
<comment type="function">
    <text>Catalyzes the phosphorylation of fructose 6-phosphate to fructose 1,6-bisphosphate using ADP as the phosphate donor.</text>
</comment>
<comment type="catalytic activity">
    <reaction evidence="1">
        <text>beta-D-fructose 6-phosphate + ADP = beta-D-fructose 1,6-bisphosphate + AMP + H(+)</text>
        <dbReference type="Rhea" id="RHEA:20105"/>
        <dbReference type="ChEBI" id="CHEBI:15378"/>
        <dbReference type="ChEBI" id="CHEBI:32966"/>
        <dbReference type="ChEBI" id="CHEBI:57634"/>
        <dbReference type="ChEBI" id="CHEBI:456215"/>
        <dbReference type="ChEBI" id="CHEBI:456216"/>
        <dbReference type="EC" id="2.7.1.146"/>
    </reaction>
</comment>
<comment type="cofactor">
    <cofactor evidence="1">
        <name>Mg(2+)</name>
        <dbReference type="ChEBI" id="CHEBI:18420"/>
    </cofactor>
    <text evidence="1">Binds 1 Mg(2+) ion per subunit.</text>
</comment>
<comment type="pathway">
    <text evidence="1">Carbohydrate degradation; glycolysis.</text>
</comment>
<comment type="subcellular location">
    <subcellularLocation>
        <location>Cytoplasm</location>
    </subcellularLocation>
</comment>
<comment type="similarity">
    <text evidence="1">Belongs to the carbohydrate kinase PfkC family.</text>
</comment>
<reference key="1">
    <citation type="journal article" date="2001" name="Biochim. Biophys. Acta">
        <title>Sequencing, expression, characterization and phylogeny of the ADP-dependent phosphofructokinase from the hyperthermophilic, euryarchaeal Thermococcus zilligii.</title>
        <authorList>
            <person name="Ronimus R.S."/>
            <person name="de Heus E."/>
            <person name="Morgan H.W."/>
        </authorList>
    </citation>
    <scope>NUCLEOTIDE SEQUENCE [GENOMIC DNA]</scope>
    <scope>CHARACTERIZATION</scope>
    <source>
        <strain>AN1</strain>
    </source>
</reference>